<protein>
    <recommendedName>
        <fullName evidence="1">Protein Vpr</fullName>
    </recommendedName>
    <alternativeName>
        <fullName evidence="1">R ORF protein</fullName>
    </alternativeName>
    <alternativeName>
        <fullName evidence="1">Viral protein R</fullName>
    </alternativeName>
</protein>
<feature type="chain" id="PRO_0000085445" description="Protein Vpr">
    <location>
        <begin position="1"/>
        <end position="96"/>
    </location>
</feature>
<feature type="region of interest" description="Homooligomerization" evidence="1">
    <location>
        <begin position="1"/>
        <end position="42"/>
    </location>
</feature>
<feature type="modified residue" description="Phosphoserine; by host" evidence="1">
    <location>
        <position position="79"/>
    </location>
</feature>
<feature type="modified residue" description="Phosphoserine; by host" evidence="1">
    <location>
        <position position="94"/>
    </location>
</feature>
<feature type="modified residue" description="Phosphoserine; by host" evidence="1">
    <location>
        <position position="96"/>
    </location>
</feature>
<dbReference type="EMBL" id="X04415">
    <property type="protein sequence ID" value="CAA28014.1"/>
    <property type="molecule type" value="Genomic_RNA"/>
</dbReference>
<dbReference type="PIR" id="T01670">
    <property type="entry name" value="T01670"/>
</dbReference>
<dbReference type="SMR" id="P05955"/>
<dbReference type="Proteomes" id="UP000007696">
    <property type="component" value="Genome"/>
</dbReference>
<dbReference type="GO" id="GO:0043657">
    <property type="term" value="C:host cell"/>
    <property type="evidence" value="ECO:0007669"/>
    <property type="project" value="GOC"/>
</dbReference>
<dbReference type="GO" id="GO:0042025">
    <property type="term" value="C:host cell nucleus"/>
    <property type="evidence" value="ECO:0007669"/>
    <property type="project" value="UniProtKB-SubCell"/>
</dbReference>
<dbReference type="GO" id="GO:0043655">
    <property type="term" value="C:host extracellular space"/>
    <property type="evidence" value="ECO:0007669"/>
    <property type="project" value="UniProtKB-SubCell"/>
</dbReference>
<dbReference type="GO" id="GO:0044423">
    <property type="term" value="C:virion component"/>
    <property type="evidence" value="ECO:0007669"/>
    <property type="project" value="UniProtKB-UniRule"/>
</dbReference>
<dbReference type="GO" id="GO:0006351">
    <property type="term" value="P:DNA-templated transcription"/>
    <property type="evidence" value="ECO:0007669"/>
    <property type="project" value="UniProtKB-UniRule"/>
</dbReference>
<dbReference type="GO" id="GO:0034220">
    <property type="term" value="P:monoatomic ion transmembrane transport"/>
    <property type="evidence" value="ECO:0007669"/>
    <property type="project" value="UniProtKB-KW"/>
</dbReference>
<dbReference type="GO" id="GO:0051260">
    <property type="term" value="P:protein homooligomerization"/>
    <property type="evidence" value="ECO:0007669"/>
    <property type="project" value="UniProtKB-UniRule"/>
</dbReference>
<dbReference type="GO" id="GO:0006355">
    <property type="term" value="P:regulation of DNA-templated transcription"/>
    <property type="evidence" value="ECO:0007669"/>
    <property type="project" value="UniProtKB-UniRule"/>
</dbReference>
<dbReference type="GO" id="GO:0046718">
    <property type="term" value="P:symbiont entry into host cell"/>
    <property type="evidence" value="ECO:0007669"/>
    <property type="project" value="UniProtKB-KW"/>
</dbReference>
<dbReference type="GO" id="GO:0052151">
    <property type="term" value="P:symbiont-mediated activation of host apoptosis"/>
    <property type="evidence" value="ECO:0007669"/>
    <property type="project" value="UniProtKB-UniRule"/>
</dbReference>
<dbReference type="GO" id="GO:0039592">
    <property type="term" value="P:symbiont-mediated arrest of host cell cycle during G2/M transition"/>
    <property type="evidence" value="ECO:0007669"/>
    <property type="project" value="UniProtKB-UniRule"/>
</dbReference>
<dbReference type="GO" id="GO:0075732">
    <property type="term" value="P:viral penetration into host nucleus"/>
    <property type="evidence" value="ECO:0007669"/>
    <property type="project" value="UniProtKB-UniRule"/>
</dbReference>
<dbReference type="FunFam" id="1.20.5.90:FF:000001">
    <property type="entry name" value="Protein Vpr"/>
    <property type="match status" value="1"/>
</dbReference>
<dbReference type="Gene3D" id="6.10.210.10">
    <property type="match status" value="1"/>
</dbReference>
<dbReference type="Gene3D" id="1.20.5.90">
    <property type="entry name" value="VpR/VpX protein, C-terminal domain"/>
    <property type="match status" value="1"/>
</dbReference>
<dbReference type="HAMAP" id="MF_04080">
    <property type="entry name" value="HIV_VPR"/>
    <property type="match status" value="1"/>
</dbReference>
<dbReference type="InterPro" id="IPR000012">
    <property type="entry name" value="RetroV_VpR/X"/>
</dbReference>
<dbReference type="Pfam" id="PF00522">
    <property type="entry name" value="VPR"/>
    <property type="match status" value="1"/>
</dbReference>
<dbReference type="PRINTS" id="PR00444">
    <property type="entry name" value="HIVVPRVPX"/>
</dbReference>
<name>VPR_HV1MA</name>
<sequence length="96" mass="11343">MEQAPADQGPQREPHNEWTLELLEELKQEAVRHFPRIWLHSLGQHIYETYGDTWEGVEAIIRSLQQLLFIHFRIGCQHSRIGITRQRRARNGSSRS</sequence>
<keyword id="KW-0010">Activator</keyword>
<keyword id="KW-0014">AIDS</keyword>
<keyword id="KW-0053">Apoptosis</keyword>
<keyword id="KW-0131">Cell cycle</keyword>
<keyword id="KW-1079">Host G2/M cell cycle arrest by virus</keyword>
<keyword id="KW-1048">Host nucleus</keyword>
<keyword id="KW-0945">Host-virus interaction</keyword>
<keyword id="KW-0407">Ion channel</keyword>
<keyword id="KW-0406">Ion transport</keyword>
<keyword id="KW-1121">Modulation of host cell cycle by virus</keyword>
<keyword id="KW-0597">Phosphoprotein</keyword>
<keyword id="KW-1185">Reference proteome</keyword>
<keyword id="KW-0804">Transcription</keyword>
<keyword id="KW-0805">Transcription regulation</keyword>
<keyword id="KW-0813">Transport</keyword>
<keyword id="KW-1163">Viral penetration into host nucleus</keyword>
<keyword id="KW-0946">Virion</keyword>
<keyword id="KW-1160">Virus entry into host cell</keyword>
<organismHost>
    <name type="scientific">Homo sapiens</name>
    <name type="common">Human</name>
    <dbReference type="NCBI Taxonomy" id="9606"/>
</organismHost>
<organism>
    <name type="scientific">Human immunodeficiency virus type 1 group M subtype A (isolate MAL)</name>
    <name type="common">HIV-1</name>
    <dbReference type="NCBI Taxonomy" id="11697"/>
    <lineage>
        <taxon>Viruses</taxon>
        <taxon>Riboviria</taxon>
        <taxon>Pararnavirae</taxon>
        <taxon>Artverviricota</taxon>
        <taxon>Revtraviricetes</taxon>
        <taxon>Ortervirales</taxon>
        <taxon>Retroviridae</taxon>
        <taxon>Orthoretrovirinae</taxon>
        <taxon>Lentivirus</taxon>
        <taxon>Human immunodeficiency virus type 1</taxon>
    </lineage>
</organism>
<comment type="function">
    <text evidence="1">During virus replication, may deplete host UNG protein, and incude G2-M cell cycle arrest. Acts by targeting specific host proteins for degradation by the 26S proteasome, through association with the cellular CUL4A-DDB1 E3 ligase complex by direct interaction with host VPRPB/DCAF-1. Cell cycle arrest reportedly occurs within hours of infection and is not blocked by antiviral agents, suggesting that it is initiated by the VPR carried into the virion. Additionally, VPR induces apoptosis in a cell cycle dependent manner suggesting that these two effects are mechanistically linked. Detected in the serum and cerebrospinal fluid of AIDS patient, VPR may also induce cell death to bystander cells.</text>
</comment>
<comment type="function">
    <text evidence="1">During virus entry, plays a role in the transport of the viral pre-integration (PIC) complex to the host nucleus. This function is crucial for viral infection of non-dividing macrophages. May act directly at the nuclear pore complex, by binding nucleoporins phenylalanine-glycine (FG)-repeat regions.</text>
</comment>
<comment type="subunit">
    <text evidence="1">Homooligomer, may form homodimer. Interacts with p6-gag region of the Pr55 Gag precursor protein through a (Leu-X-X)4 motif near the C-terminus of the P6gag protein. Interacts with host UNG. May interact with host RAD23A/HHR23A. Interacts with host VPRBP/DCAF1, leading to hijack the CUL4A-RBX1-DDB1-DCAF1/VPRBP complex, mediating ubiquitination of host proteins such as TERT and ZGPAT and arrest of the cell cycle in G2 phase.</text>
</comment>
<comment type="subcellular location">
    <subcellularLocation>
        <location evidence="1">Virion</location>
    </subcellularLocation>
    <subcellularLocation>
        <location evidence="1">Host nucleus</location>
    </subcellularLocation>
    <subcellularLocation>
        <location evidence="1">Host extracellular space</location>
    </subcellularLocation>
    <text evidence="1">Incorporation into virion is dependent on p6 GAG sequences. Lacks a canonical nuclear localization signal, thus import into nucleus may function independently of the human importin pathway. Detected in high quantity in the serum and cerebrospinal fluid of AIDS patient.</text>
</comment>
<comment type="PTM">
    <text evidence="1">Phosphorylated on several residues by host. These phosphorylations regulate VPR activity for the nuclear import of the HIV-1 pre-integration complex.</text>
</comment>
<comment type="miscellaneous">
    <text evidence="1">HIV-1 lineages are divided in three main groups, M (for Major), O (for Outlier), and N (for New, or Non-M, Non-O). The vast majority of strains found worldwide belong to the group M. Group O seems to be endemic to and largely confined to Cameroon and neighboring countries in West Central Africa, where these viruses represent a small minority of HIV-1 strains. The group N is represented by a limited number of isolates from Cameroonian persons. The group M is further subdivided in 9 clades or subtypes (A to D, F to H, J and K).</text>
</comment>
<comment type="similarity">
    <text evidence="1">Belongs to the HIV-1 VPR protein family.</text>
</comment>
<evidence type="ECO:0000255" key="1">
    <source>
        <dbReference type="HAMAP-Rule" id="MF_04080"/>
    </source>
</evidence>
<accession>P05955</accession>
<proteinExistence type="inferred from homology"/>
<reference key="1">
    <citation type="journal article" date="1986" name="Cell">
        <title>Genetic variability of the AIDS virus: nucleotide sequence analysis of two isolates from African patients.</title>
        <authorList>
            <person name="Alizon M."/>
            <person name="Wain-Hobson S."/>
            <person name="Montagnier L."/>
            <person name="Sonigo P."/>
        </authorList>
    </citation>
    <scope>NUCLEOTIDE SEQUENCE [GENOMIC RNA]</scope>
</reference>
<gene>
    <name evidence="1" type="primary">vpr</name>
</gene>